<name>O162_CONVR</name>
<sequence>MKLTCVLITTVLFLTASQLITADYSRDKRQYRAVRLRDEMRNFKGARDCGEQGQGCYIYPCCPGLTCLGGGTGGGVCQPQ</sequence>
<comment type="function">
    <text evidence="2">Ion channel inhibitor that inhibits the increase in intracellular calcium upon depolarization in DRG neurons. In vivo, both intraperitoneal and intracranial injections into mice induce hyperactivity.</text>
</comment>
<comment type="subcellular location">
    <subcellularLocation>
        <location evidence="6">Secreted</location>
    </subcellularLocation>
</comment>
<comment type="tissue specificity">
    <text evidence="6">Expressed by the venom duct.</text>
</comment>
<comment type="domain">
    <text evidence="5">The presence of a 'disulfide through disulfide knot' structurally defines this protein as a knottin.</text>
</comment>
<comment type="domain">
    <text evidence="5">The cysteine framework is VI/VII (C-C-CC-C-C).</text>
</comment>
<comment type="similarity">
    <text evidence="5">Belongs to the conotoxin O1 superfamily.</text>
</comment>
<organism>
    <name type="scientific">Conus virgo</name>
    <name type="common">Virgin cone</name>
    <dbReference type="NCBI Taxonomy" id="89427"/>
    <lineage>
        <taxon>Eukaryota</taxon>
        <taxon>Metazoa</taxon>
        <taxon>Spiralia</taxon>
        <taxon>Lophotrochozoa</taxon>
        <taxon>Mollusca</taxon>
        <taxon>Gastropoda</taxon>
        <taxon>Caenogastropoda</taxon>
        <taxon>Neogastropoda</taxon>
        <taxon>Conoidea</taxon>
        <taxon>Conidae</taxon>
        <taxon>Conus</taxon>
        <taxon>Virgiconus</taxon>
    </lineage>
</organism>
<dbReference type="SMR" id="P0DW74"/>
<dbReference type="GO" id="GO:0005576">
    <property type="term" value="C:extracellular region"/>
    <property type="evidence" value="ECO:0007669"/>
    <property type="project" value="UniProtKB-SubCell"/>
</dbReference>
<dbReference type="GO" id="GO:0008200">
    <property type="term" value="F:ion channel inhibitor activity"/>
    <property type="evidence" value="ECO:0007669"/>
    <property type="project" value="InterPro"/>
</dbReference>
<dbReference type="GO" id="GO:0090729">
    <property type="term" value="F:toxin activity"/>
    <property type="evidence" value="ECO:0007669"/>
    <property type="project" value="UniProtKB-KW"/>
</dbReference>
<dbReference type="InterPro" id="IPR004214">
    <property type="entry name" value="Conotoxin"/>
</dbReference>
<dbReference type="Pfam" id="PF02950">
    <property type="entry name" value="Conotoxin"/>
    <property type="match status" value="1"/>
</dbReference>
<feature type="signal peptide" evidence="3">
    <location>
        <begin position="1"/>
        <end position="22"/>
    </location>
</feature>
<feature type="propeptide" id="PRO_0000456324" evidence="2">
    <location>
        <begin position="23"/>
        <end position="47"/>
    </location>
</feature>
<feature type="peptide" id="PRO_0000456325" description="Conotoxin Vi6.2" evidence="2">
    <location>
        <begin position="48"/>
        <end position="80"/>
    </location>
</feature>
<feature type="modified residue" description="4-hydroxyproline" evidence="2">
    <location>
        <position position="60"/>
    </location>
</feature>
<feature type="modified residue" description="4-hydroxyproline" evidence="2">
    <location>
        <position position="63"/>
    </location>
</feature>
<feature type="disulfide bond" evidence="1">
    <location>
        <begin position="49"/>
        <end position="62"/>
    </location>
</feature>
<feature type="disulfide bond" evidence="1">
    <location>
        <begin position="56"/>
        <end position="67"/>
    </location>
</feature>
<feature type="disulfide bond" evidence="1">
    <location>
        <begin position="61"/>
        <end position="77"/>
    </location>
</feature>
<keyword id="KW-1015">Disulfide bond</keyword>
<keyword id="KW-0379">Hydroxylation</keyword>
<keyword id="KW-0872">Ion channel impairing toxin</keyword>
<keyword id="KW-0960">Knottin</keyword>
<keyword id="KW-0964">Secreted</keyword>
<keyword id="KW-0732">Signal</keyword>
<keyword id="KW-0800">Toxin</keyword>
<reference key="1">
    <citation type="journal article" date="2016" name="Toxicon">
        <title>Glycine-rich conotoxins from the Virgiconus clade.</title>
        <authorList>
            <person name="Espino S.S."/>
            <person name="Dilanyan T."/>
            <person name="Imperial J.S."/>
            <person name="Aguilar M.B."/>
            <person name="Teichert R.W."/>
            <person name="Bandyopadhyay P."/>
            <person name="Olivera B.M."/>
        </authorList>
    </citation>
    <scope>NUCLEOTIDE SEQUENCE [MRNA]</scope>
    <source>
        <tissue>Venom duct</tissue>
    </source>
</reference>
<proteinExistence type="inferred from homology"/>
<accession>P0DW74</accession>
<evidence type="ECO:0000250" key="1">
    <source>
        <dbReference type="UniProtKB" id="P60179"/>
    </source>
</evidence>
<evidence type="ECO:0000250" key="2">
    <source>
        <dbReference type="UniProtKB" id="Q5K0C7"/>
    </source>
</evidence>
<evidence type="ECO:0000255" key="3"/>
<evidence type="ECO:0000303" key="4">
    <source>
    </source>
</evidence>
<evidence type="ECO:0000305" key="5"/>
<evidence type="ECO:0000305" key="6">
    <source>
    </source>
</evidence>
<protein>
    <recommendedName>
        <fullName evidence="4">Conotoxin Vi6.2</fullName>
    </recommendedName>
</protein>